<evidence type="ECO:0000250" key="1"/>
<evidence type="ECO:0000250" key="2">
    <source>
        <dbReference type="UniProtKB" id="Q68E01"/>
    </source>
</evidence>
<evidence type="ECO:0000250" key="3">
    <source>
        <dbReference type="UniProtKB" id="Q7PLS8"/>
    </source>
</evidence>
<evidence type="ECO:0000256" key="4">
    <source>
        <dbReference type="SAM" id="MobiDB-lite"/>
    </source>
</evidence>
<evidence type="ECO:0000305" key="5"/>
<keyword id="KW-0963">Cytoplasm</keyword>
<keyword id="KW-0539">Nucleus</keyword>
<keyword id="KW-0597">Phosphoprotein</keyword>
<protein>
    <recommendedName>
        <fullName>Integrator complex subunit 3 homolog</fullName>
    </recommendedName>
    <alternativeName>
        <fullName>SOSS complex subunit A homolog</fullName>
    </alternativeName>
</protein>
<organism>
    <name type="scientific">Drosophila erecta</name>
    <name type="common">Fruit fly</name>
    <dbReference type="NCBI Taxonomy" id="7220"/>
    <lineage>
        <taxon>Eukaryota</taxon>
        <taxon>Metazoa</taxon>
        <taxon>Ecdysozoa</taxon>
        <taxon>Arthropoda</taxon>
        <taxon>Hexapoda</taxon>
        <taxon>Insecta</taxon>
        <taxon>Pterygota</taxon>
        <taxon>Neoptera</taxon>
        <taxon>Endopterygota</taxon>
        <taxon>Diptera</taxon>
        <taxon>Brachycera</taxon>
        <taxon>Muscomorpha</taxon>
        <taxon>Ephydroidea</taxon>
        <taxon>Drosophilidae</taxon>
        <taxon>Drosophila</taxon>
        <taxon>Sophophora</taxon>
    </lineage>
</organism>
<name>INT3_DROER</name>
<proteinExistence type="inferred from homology"/>
<gene>
    <name type="primary">IntS3</name>
    <name type="ORF">GG23122</name>
</gene>
<comment type="function">
    <text evidence="3">Component of the integrator complex, a multiprotein complex that terminates RNA polymerase II (Pol II) transcription in the promoter-proximal region of genes. The integrator complex provides a quality checkpoint during transcription elongation by driving premature transcription termination of transcripts that are unfavorably configured for transcriptional elongation: the complex terminates transcription by (1) catalyzing dephosphorylation of the C-terminal domain (CTD) of Pol II subunit Polr2A/Rbp1 and Spt5, and (2) degrading the exiting nascent RNA transcript via endonuclease activity. The integrator complex is also involved in the 3'-end processing of the U7 snRNA, and also the spliceosomal snRNAs U1, U2, U4 and U5.</text>
</comment>
<comment type="subunit">
    <text evidence="3">Belongs to the multiprotein complex Integrator, at least composed of IntS1, IntS2, IntS3, IntS4, omd/IntS5, IntS6, defl/IntS7, IntS8, IntS9, IntS10, IntS11, IntS12, asun/IntS13, IntS14 and IntS15. The core complex associates with protein phosphatase 2A subunits mts/PP2A and Pp2A-29B, to form the Integrator-PP2A (INTAC) complex.</text>
</comment>
<comment type="subcellular location">
    <subcellularLocation>
        <location evidence="2">Nucleus</location>
    </subcellularLocation>
    <subcellularLocation>
        <location evidence="2">Cytoplasm</location>
    </subcellularLocation>
</comment>
<comment type="similarity">
    <text evidence="5">Belongs to the Integrator subunit 3 family.</text>
</comment>
<dbReference type="EMBL" id="CH954177">
    <property type="protein sequence ID" value="EDV59943.1"/>
    <property type="molecule type" value="Genomic_DNA"/>
</dbReference>
<dbReference type="SMR" id="B3N449"/>
<dbReference type="EnsemblMetazoa" id="FBtr0143176">
    <property type="protein sequence ID" value="FBpp0141668"/>
    <property type="gene ID" value="FBgn0115275"/>
</dbReference>
<dbReference type="EnsemblMetazoa" id="XM_001970848.3">
    <property type="protein sequence ID" value="XP_001970884.1"/>
    <property type="gene ID" value="LOC6543033"/>
</dbReference>
<dbReference type="GeneID" id="6543033"/>
<dbReference type="KEGG" id="der:6543033"/>
<dbReference type="CTD" id="65123"/>
<dbReference type="eggNOG" id="KOG4262">
    <property type="taxonomic scope" value="Eukaryota"/>
</dbReference>
<dbReference type="HOGENOM" id="CLU_007659_0_0_1"/>
<dbReference type="OMA" id="FEQYCLW"/>
<dbReference type="OrthoDB" id="2021145at2759"/>
<dbReference type="PhylomeDB" id="B3N449"/>
<dbReference type="Proteomes" id="UP000008711">
    <property type="component" value="Unassembled WGS sequence"/>
</dbReference>
<dbReference type="GO" id="GO:0005737">
    <property type="term" value="C:cytoplasm"/>
    <property type="evidence" value="ECO:0007669"/>
    <property type="project" value="UniProtKB-SubCell"/>
</dbReference>
<dbReference type="GO" id="GO:0005634">
    <property type="term" value="C:nucleus"/>
    <property type="evidence" value="ECO:0007669"/>
    <property type="project" value="UniProtKB-SubCell"/>
</dbReference>
<dbReference type="InterPro" id="IPR056518">
    <property type="entry name" value="HEAT_Ints3_C"/>
</dbReference>
<dbReference type="InterPro" id="IPR045334">
    <property type="entry name" value="INTS3"/>
</dbReference>
<dbReference type="InterPro" id="IPR019333">
    <property type="entry name" value="INTS3_N"/>
</dbReference>
<dbReference type="PANTHER" id="PTHR13587">
    <property type="entry name" value="INTEGRATOR COMPLEX SUBUNIT 3"/>
    <property type="match status" value="1"/>
</dbReference>
<dbReference type="PANTHER" id="PTHR13587:SF7">
    <property type="entry name" value="INTEGRATOR COMPLEX SUBUNIT 3"/>
    <property type="match status" value="1"/>
</dbReference>
<dbReference type="Pfam" id="PF24566">
    <property type="entry name" value="HEAT_Ints3_C"/>
    <property type="match status" value="1"/>
</dbReference>
<dbReference type="Pfam" id="PF10189">
    <property type="entry name" value="Ints3_N"/>
    <property type="match status" value="1"/>
</dbReference>
<reference key="1">
    <citation type="journal article" date="2007" name="Nature">
        <title>Evolution of genes and genomes on the Drosophila phylogeny.</title>
        <authorList>
            <consortium name="Drosophila 12 genomes consortium"/>
        </authorList>
    </citation>
    <scope>NUCLEOTIDE SEQUENCE [LARGE SCALE GENOMIC DNA]</scope>
    <source>
        <strain>Tucson 14021-0224.01</strain>
    </source>
</reference>
<feature type="chain" id="PRO_0000385308" description="Integrator complex subunit 3 homolog">
    <location>
        <begin position="1"/>
        <end position="1072"/>
    </location>
</feature>
<feature type="region of interest" description="Disordered" evidence="4">
    <location>
        <begin position="920"/>
        <end position="941"/>
    </location>
</feature>
<feature type="region of interest" description="Disordered" evidence="4">
    <location>
        <begin position="1002"/>
        <end position="1072"/>
    </location>
</feature>
<feature type="modified residue" description="Phosphoserine" evidence="1">
    <location>
        <position position="1042"/>
    </location>
</feature>
<feature type="modified residue" description="Phosphoserine" evidence="1">
    <location>
        <position position="1043"/>
    </location>
</feature>
<feature type="modified residue" description="Phosphoserine" evidence="1">
    <location>
        <position position="1047"/>
    </location>
</feature>
<feature type="modified residue" description="Phosphoserine" evidence="1">
    <location>
        <position position="1048"/>
    </location>
</feature>
<sequence>MEQQQSKNNAHVSKLFVCTAVDCKDDIEEKFERSFVTLQMQISGLSDKEMHDMLSQAVCKDKQHEEISIGFLYIMLTDPSMAPKTYRDVTLVSRDGMNGIVTNLTFLVAEKYTKLTEVARRQLIWLLREFVKHQVLSVENVIWNCLRQAGGGDVSSRNLFLIESLLDIFIEFRTWLEGNPFLVQSTVYSFVRLIEDHANPALMSLRQKEVKFTISLIRERFHDIIPLGRDFVRLLQNVARIPEFEQLWRDILFNPKILNQTFNGIWQLLHIRTSRRFLQCRLLPEMERKISFLASSVKFGNQKRYQDWFQEKYFATPESHSLRSDLIRFIINVIHPTNDMLCSDIIPRWAIIGWLISSCTNPIASANAKLSLFYDWLFFDPAKDNIMNIEPGILVMYHSIRNHPFVSSTLLDFLCRITKNFFVKHEDKIRIGVYNSLKLILEKQVIPNLQPLFESPKLDRELRNLIRDNFREFLSPPANLGQLLYPSTHTVQGHILKKESDQRILHCENADLHETGLINISGTVISVVDEDKKISLVPTDQEIESVFSDGTAENLRRVHNIDENTDDDDDLPLSKVRLKEKPRVELADAIAESFESFVSKRNSYTWEAFLKDFRPLPASAFEEFQLNYVISNTVLILRETLPQQNIFSESKTDEKHLAKSISYPLYGLFRFLYENDEKSKKPFQILLSEICERIPEIGYLLLYFMKIYCKLQTRKNSQQSYQFKTTIYRQICDAADEKIANCLLRDLDMLEKENTNIFLWLLPDIYREFKSIATNNTDLLRITLRCIDARNVRDILYSVAQGKLTIFKQDGLIDCIRESLEFETYEQFCLWQIVQAHDVPLRCIQDLLPELEAGSHPEALSHFLLLLKNEEPTNEIIRLMLSREPKSKGDPFVTSALRFWCQRYEEKLSEIIASLLTSKYPSSSPNKRKRPPKGISVSTSIPSADQVLNHLEHYRRSCRHGTGTGLYVHDMMQRALQSAYSHSNDSTKKQFSDLFALAAEEDTTVGRRGGSGRGRKQPGSKKDVNNHGTSKKTAEMVKTIYSSDENSSEEDWSKSKITQTAKRRKKANNDSD</sequence>
<accession>B3N449</accession>